<sequence length="559" mass="61245">MAASKKAVLGPLVGAVDQGTSSTRFLVFNSKTAELLSHHQVEIKQEFPREGWVEQDPKEILHSVYECIEKTCEKLGQLNIDISNIKAIGVSNQRETTVVWDKITGEPLYNAVVWLDLRTQSTVESLSKRIPGNNNFVKSKTGLPLSTYFSAVKLRWLLDNVRKVQKAVEEKRALFGTIDSWLIWSLTGGVNGGVHCTDVTNASRTMLFNIHSLEWDKQLCEFFGIPMEILPNVRSSSEIYGLMKISHSVKAGALEGVPISGCLGDQSAALVGQMCFQIGQAKNTYGTGCFLLCNTGHKCVFSDHGLLTTVAYKLGRDKPVYYALEGSVAIAGAVIRWLRDNLGIIKTSEEIEKLAKEVGTSYGCYFVPAFSGLYAPYWEPSARGIICGLTQFTNKCHIAFAALEAVCFQTREILDAMNRDCGIPLSHLQVDGGMTSNKILMQLQADILYIPVVKPSMPETTALGAAMAAGAAEGVGVWSLEPEDLSAVTMERFEPQINAEESEIRYSTWKKAVMKSMGWVTTQSPESGDPSIFCSLPLGFFIVSSMVMLIGARYISGIP</sequence>
<accession>P32189</accession>
<accession>A6NJP5</accession>
<accession>B2R833</accession>
<accession>Q6IQ27</accession>
<accession>Q8IVR5</accession>
<accession>Q9UMP0</accession>
<accession>Q9UMP1</accession>
<proteinExistence type="evidence at protein level"/>
<organism>
    <name type="scientific">Homo sapiens</name>
    <name type="common">Human</name>
    <dbReference type="NCBI Taxonomy" id="9606"/>
    <lineage>
        <taxon>Eukaryota</taxon>
        <taxon>Metazoa</taxon>
        <taxon>Chordata</taxon>
        <taxon>Craniata</taxon>
        <taxon>Vertebrata</taxon>
        <taxon>Euteleostomi</taxon>
        <taxon>Mammalia</taxon>
        <taxon>Eutheria</taxon>
        <taxon>Euarchontoglires</taxon>
        <taxon>Primates</taxon>
        <taxon>Haplorrhini</taxon>
        <taxon>Catarrhini</taxon>
        <taxon>Hominidae</taxon>
        <taxon>Homo</taxon>
    </lineage>
</organism>
<feature type="chain" id="PRO_0000059535" description="Glycerol kinase">
    <location>
        <begin position="1"/>
        <end position="559"/>
    </location>
</feature>
<feature type="transmembrane region" description="Helical" evidence="2">
    <location>
        <begin position="532"/>
        <end position="552"/>
    </location>
</feature>
<feature type="binding site" evidence="1">
    <location>
        <position position="20"/>
    </location>
    <ligand>
        <name>ADP</name>
        <dbReference type="ChEBI" id="CHEBI:456216"/>
    </ligand>
</feature>
<feature type="binding site" evidence="1">
    <location>
        <position position="20"/>
    </location>
    <ligand>
        <name>ATP</name>
        <dbReference type="ChEBI" id="CHEBI:30616"/>
    </ligand>
</feature>
<feature type="binding site" evidence="1">
    <location>
        <position position="20"/>
    </location>
    <ligand>
        <name>sn-glycerol 3-phosphate</name>
        <dbReference type="ChEBI" id="CHEBI:57597"/>
    </ligand>
</feature>
<feature type="binding site" evidence="1">
    <location>
        <position position="21"/>
    </location>
    <ligand>
        <name>ATP</name>
        <dbReference type="ChEBI" id="CHEBI:30616"/>
    </ligand>
</feature>
<feature type="binding site" evidence="1">
    <location>
        <position position="22"/>
    </location>
    <ligand>
        <name>ATP</name>
        <dbReference type="ChEBI" id="CHEBI:30616"/>
    </ligand>
</feature>
<feature type="binding site" evidence="1">
    <location>
        <position position="24"/>
    </location>
    <ligand>
        <name>ADP</name>
        <dbReference type="ChEBI" id="CHEBI:456216"/>
    </ligand>
</feature>
<feature type="binding site" evidence="1">
    <location>
        <position position="94"/>
    </location>
    <ligand>
        <name>glycerol</name>
        <dbReference type="ChEBI" id="CHEBI:17754"/>
    </ligand>
</feature>
<feature type="binding site" evidence="1">
    <location>
        <position position="94"/>
    </location>
    <ligand>
        <name>sn-glycerol 3-phosphate</name>
        <dbReference type="ChEBI" id="CHEBI:57597"/>
    </ligand>
</feature>
<feature type="binding site" evidence="1">
    <location>
        <position position="95"/>
    </location>
    <ligand>
        <name>glycerol</name>
        <dbReference type="ChEBI" id="CHEBI:17754"/>
    </ligand>
</feature>
<feature type="binding site" evidence="1">
    <location>
        <position position="95"/>
    </location>
    <ligand>
        <name>sn-glycerol 3-phosphate</name>
        <dbReference type="ChEBI" id="CHEBI:57597"/>
    </ligand>
</feature>
<feature type="binding site" evidence="1">
    <location>
        <position position="148"/>
    </location>
    <ligand>
        <name>glycerol</name>
        <dbReference type="ChEBI" id="CHEBI:17754"/>
    </ligand>
</feature>
<feature type="binding site" evidence="1">
    <location>
        <position position="148"/>
    </location>
    <ligand>
        <name>sn-glycerol 3-phosphate</name>
        <dbReference type="ChEBI" id="CHEBI:57597"/>
    </ligand>
</feature>
<feature type="binding site" evidence="1">
    <location>
        <position position="252"/>
    </location>
    <ligand>
        <name>beta-D-fructose 1,6-bisphosphate</name>
        <dbReference type="ChEBI" id="CHEBI:32966"/>
        <note>allosteric inhibitor</note>
    </ligand>
</feature>
<feature type="binding site" evidence="1">
    <location>
        <position position="265"/>
    </location>
    <ligand>
        <name>glycerol</name>
        <dbReference type="ChEBI" id="CHEBI:17754"/>
    </ligand>
</feature>
<feature type="binding site" evidence="1">
    <location>
        <position position="265"/>
    </location>
    <ligand>
        <name>sn-glycerol 3-phosphate</name>
        <dbReference type="ChEBI" id="CHEBI:57597"/>
    </ligand>
</feature>
<feature type="binding site" evidence="1">
    <location>
        <position position="266"/>
    </location>
    <ligand>
        <name>glycerol</name>
        <dbReference type="ChEBI" id="CHEBI:17754"/>
    </ligand>
</feature>
<feature type="binding site" evidence="1">
    <location>
        <position position="287"/>
    </location>
    <ligand>
        <name>ADP</name>
        <dbReference type="ChEBI" id="CHEBI:456216"/>
    </ligand>
</feature>
<feature type="binding site" evidence="1">
    <location>
        <position position="287"/>
    </location>
    <ligand>
        <name>ATP</name>
        <dbReference type="ChEBI" id="CHEBI:30616"/>
    </ligand>
</feature>
<feature type="binding site" evidence="1">
    <location>
        <position position="332"/>
    </location>
    <ligand>
        <name>ADP</name>
        <dbReference type="ChEBI" id="CHEBI:456216"/>
    </ligand>
</feature>
<feature type="binding site" evidence="1">
    <location>
        <position position="332"/>
    </location>
    <ligand>
        <name>ATP</name>
        <dbReference type="ChEBI" id="CHEBI:30616"/>
    </ligand>
</feature>
<feature type="binding site" evidence="1">
    <location>
        <position position="433"/>
    </location>
    <ligand>
        <name>ADP</name>
        <dbReference type="ChEBI" id="CHEBI:456216"/>
    </ligand>
</feature>
<feature type="binding site" evidence="1">
    <location>
        <position position="433"/>
    </location>
    <ligand>
        <name>ATP</name>
        <dbReference type="ChEBI" id="CHEBI:30616"/>
    </ligand>
</feature>
<feature type="binding site" evidence="1">
    <location>
        <position position="437"/>
    </location>
    <ligand>
        <name>ADP</name>
        <dbReference type="ChEBI" id="CHEBI:456216"/>
    </ligand>
</feature>
<feature type="splice variant" id="VSP_000770" description="In isoform 1 and isoform 2." evidence="9 10 12 13 14">
    <location>
        <begin position="245"/>
        <end position="250"/>
    </location>
</feature>
<feature type="splice variant" id="VSP_000771" description="In isoform 1 and isoform 4." evidence="9 10 13 14">
    <location>
        <begin position="528"/>
        <end position="556"/>
    </location>
</feature>
<feature type="sequence variant" id="VAR_068980" description="In dbSNP:rs17857267." evidence="4">
    <original>N</original>
    <variation>K</variation>
    <location>
        <position position="79"/>
    </location>
</feature>
<feature type="sequence variant" id="VAR_068981" description="In dbSNP:rs17854203." evidence="4">
    <original>P</original>
    <variation>T</variation>
    <location>
        <position position="131"/>
    </location>
</feature>
<feature type="sequence variant" id="VAR_001374">
    <original>S</original>
    <variation>N</variation>
    <location>
        <position position="185"/>
    </location>
</feature>
<feature type="sequence variant" id="VAR_001375">
    <original>N</original>
    <variation>H</variation>
    <location>
        <position position="232"/>
    </location>
</feature>
<feature type="sequence variant" id="VAR_015433" description="In GKD; dbSNP:rs132630331." evidence="3">
    <original>N</original>
    <variation>D</variation>
    <location>
        <position position="294"/>
    </location>
</feature>
<feature type="sequence variant" id="VAR_001376" description="In dbSNP:rs753857355.">
    <original>A</original>
    <variation>T</variation>
    <location>
        <position position="382"/>
    </location>
</feature>
<feature type="sequence variant" id="VAR_001377" description="In GKD; dbSNP:rs132630328." evidence="7">
    <original>D</original>
    <variation>V</variation>
    <location>
        <position position="446"/>
    </location>
</feature>
<feature type="sequence variant" id="VAR_010138" description="In GKD; dbSNP:rs132630330." evidence="8">
    <original>W</original>
    <variation>R</variation>
    <location>
        <position position="509"/>
    </location>
</feature>
<dbReference type="EC" id="2.7.1.30" evidence="6"/>
<dbReference type="EMBL" id="L13943">
    <property type="protein sequence ID" value="AAA52576.1"/>
    <property type="molecule type" value="mRNA"/>
</dbReference>
<dbReference type="EMBL" id="X78211">
    <property type="status" value="NOT_ANNOTATED_CDS"/>
    <property type="molecule type" value="Genomic_DNA"/>
</dbReference>
<dbReference type="EMBL" id="AJ252550">
    <property type="protein sequence ID" value="CAB54859.1"/>
    <property type="molecule type" value="Genomic_DNA"/>
</dbReference>
<dbReference type="EMBL" id="AJ252551">
    <property type="protein sequence ID" value="CAB54859.1"/>
    <property type="status" value="JOINED"/>
    <property type="molecule type" value="Genomic_DNA"/>
</dbReference>
<dbReference type="EMBL" id="AJ252552">
    <property type="protein sequence ID" value="CAB54859.1"/>
    <property type="status" value="JOINED"/>
    <property type="molecule type" value="Genomic_DNA"/>
</dbReference>
<dbReference type="EMBL" id="AJ252553">
    <property type="protein sequence ID" value="CAB54859.1"/>
    <property type="status" value="JOINED"/>
    <property type="molecule type" value="Genomic_DNA"/>
</dbReference>
<dbReference type="EMBL" id="AJ252554">
    <property type="protein sequence ID" value="CAB54859.1"/>
    <property type="status" value="JOINED"/>
    <property type="molecule type" value="Genomic_DNA"/>
</dbReference>
<dbReference type="EMBL" id="AJ252555">
    <property type="protein sequence ID" value="CAB54859.1"/>
    <property type="status" value="JOINED"/>
    <property type="molecule type" value="Genomic_DNA"/>
</dbReference>
<dbReference type="EMBL" id="AJ252556">
    <property type="protein sequence ID" value="CAB54859.1"/>
    <property type="status" value="JOINED"/>
    <property type="molecule type" value="Genomic_DNA"/>
</dbReference>
<dbReference type="EMBL" id="AJ252557">
    <property type="protein sequence ID" value="CAB54859.1"/>
    <property type="status" value="JOINED"/>
    <property type="molecule type" value="Genomic_DNA"/>
</dbReference>
<dbReference type="EMBL" id="AJ252558">
    <property type="protein sequence ID" value="CAB54859.1"/>
    <property type="status" value="JOINED"/>
    <property type="molecule type" value="Genomic_DNA"/>
</dbReference>
<dbReference type="EMBL" id="AJ252559">
    <property type="protein sequence ID" value="CAB54859.1"/>
    <property type="status" value="JOINED"/>
    <property type="molecule type" value="Genomic_DNA"/>
</dbReference>
<dbReference type="EMBL" id="AJ252560">
    <property type="protein sequence ID" value="CAB54859.1"/>
    <property type="status" value="JOINED"/>
    <property type="molecule type" value="Genomic_DNA"/>
</dbReference>
<dbReference type="EMBL" id="AJ252561">
    <property type="protein sequence ID" value="CAB54859.1"/>
    <property type="status" value="JOINED"/>
    <property type="molecule type" value="Genomic_DNA"/>
</dbReference>
<dbReference type="EMBL" id="AJ252562">
    <property type="protein sequence ID" value="CAB54859.1"/>
    <property type="status" value="JOINED"/>
    <property type="molecule type" value="Genomic_DNA"/>
</dbReference>
<dbReference type="EMBL" id="AJ252563">
    <property type="protein sequence ID" value="CAB54859.1"/>
    <property type="status" value="JOINED"/>
    <property type="molecule type" value="Genomic_DNA"/>
</dbReference>
<dbReference type="EMBL" id="AJ252564">
    <property type="protein sequence ID" value="CAB54859.1"/>
    <property type="status" value="JOINED"/>
    <property type="molecule type" value="Genomic_DNA"/>
</dbReference>
<dbReference type="EMBL" id="AJ252565">
    <property type="protein sequence ID" value="CAB54859.1"/>
    <property type="status" value="JOINED"/>
    <property type="molecule type" value="Genomic_DNA"/>
</dbReference>
<dbReference type="EMBL" id="AJ252566">
    <property type="protein sequence ID" value="CAB54859.1"/>
    <property type="status" value="JOINED"/>
    <property type="molecule type" value="Genomic_DNA"/>
</dbReference>
<dbReference type="EMBL" id="AJ252567">
    <property type="protein sequence ID" value="CAB54859.1"/>
    <property type="status" value="JOINED"/>
    <property type="molecule type" value="Genomic_DNA"/>
</dbReference>
<dbReference type="EMBL" id="AJ252568">
    <property type="protein sequence ID" value="CAB54859.1"/>
    <property type="status" value="JOINED"/>
    <property type="molecule type" value="Genomic_DNA"/>
</dbReference>
<dbReference type="EMBL" id="AJ252569">
    <property type="protein sequence ID" value="CAB54859.1"/>
    <property type="status" value="JOINED"/>
    <property type="molecule type" value="Genomic_DNA"/>
</dbReference>
<dbReference type="EMBL" id="AJ252570">
    <property type="protein sequence ID" value="CAB54859.1"/>
    <property type="status" value="JOINED"/>
    <property type="molecule type" value="Genomic_DNA"/>
</dbReference>
<dbReference type="EMBL" id="AJ252550">
    <property type="protein sequence ID" value="CAB54858.1"/>
    <property type="molecule type" value="Genomic_DNA"/>
</dbReference>
<dbReference type="EMBL" id="AJ252551">
    <property type="protein sequence ID" value="CAB54858.1"/>
    <property type="status" value="JOINED"/>
    <property type="molecule type" value="Genomic_DNA"/>
</dbReference>
<dbReference type="EMBL" id="AJ252552">
    <property type="protein sequence ID" value="CAB54858.1"/>
    <property type="status" value="JOINED"/>
    <property type="molecule type" value="Genomic_DNA"/>
</dbReference>
<dbReference type="EMBL" id="AJ252553">
    <property type="protein sequence ID" value="CAB54858.1"/>
    <property type="status" value="JOINED"/>
    <property type="molecule type" value="Genomic_DNA"/>
</dbReference>
<dbReference type="EMBL" id="AJ252554">
    <property type="protein sequence ID" value="CAB54858.1"/>
    <property type="status" value="JOINED"/>
    <property type="molecule type" value="Genomic_DNA"/>
</dbReference>
<dbReference type="EMBL" id="AJ252555">
    <property type="protein sequence ID" value="CAB54858.1"/>
    <property type="status" value="JOINED"/>
    <property type="molecule type" value="Genomic_DNA"/>
</dbReference>
<dbReference type="EMBL" id="AJ252556">
    <property type="protein sequence ID" value="CAB54858.1"/>
    <property type="status" value="JOINED"/>
    <property type="molecule type" value="Genomic_DNA"/>
</dbReference>
<dbReference type="EMBL" id="AJ252557">
    <property type="protein sequence ID" value="CAB54858.1"/>
    <property type="status" value="JOINED"/>
    <property type="molecule type" value="Genomic_DNA"/>
</dbReference>
<dbReference type="EMBL" id="AJ252559">
    <property type="protein sequence ID" value="CAB54858.1"/>
    <property type="status" value="JOINED"/>
    <property type="molecule type" value="Genomic_DNA"/>
</dbReference>
<dbReference type="EMBL" id="AJ252560">
    <property type="protein sequence ID" value="CAB54858.1"/>
    <property type="status" value="JOINED"/>
    <property type="molecule type" value="Genomic_DNA"/>
</dbReference>
<dbReference type="EMBL" id="AJ252561">
    <property type="protein sequence ID" value="CAB54858.1"/>
    <property type="status" value="JOINED"/>
    <property type="molecule type" value="Genomic_DNA"/>
</dbReference>
<dbReference type="EMBL" id="AJ252562">
    <property type="protein sequence ID" value="CAB54858.1"/>
    <property type="status" value="JOINED"/>
    <property type="molecule type" value="Genomic_DNA"/>
</dbReference>
<dbReference type="EMBL" id="AJ252563">
    <property type="protein sequence ID" value="CAB54858.1"/>
    <property type="status" value="JOINED"/>
    <property type="molecule type" value="Genomic_DNA"/>
</dbReference>
<dbReference type="EMBL" id="AJ252564">
    <property type="protein sequence ID" value="CAB54858.1"/>
    <property type="status" value="JOINED"/>
    <property type="molecule type" value="Genomic_DNA"/>
</dbReference>
<dbReference type="EMBL" id="AJ252565">
    <property type="protein sequence ID" value="CAB54858.1"/>
    <property type="status" value="JOINED"/>
    <property type="molecule type" value="Genomic_DNA"/>
</dbReference>
<dbReference type="EMBL" id="AJ252566">
    <property type="protein sequence ID" value="CAB54858.1"/>
    <property type="status" value="JOINED"/>
    <property type="molecule type" value="Genomic_DNA"/>
</dbReference>
<dbReference type="EMBL" id="AJ252567">
    <property type="protein sequence ID" value="CAB54858.1"/>
    <property type="status" value="JOINED"/>
    <property type="molecule type" value="Genomic_DNA"/>
</dbReference>
<dbReference type="EMBL" id="AJ252568">
    <property type="protein sequence ID" value="CAB54858.1"/>
    <property type="status" value="JOINED"/>
    <property type="molecule type" value="Genomic_DNA"/>
</dbReference>
<dbReference type="EMBL" id="AJ252569">
    <property type="protein sequence ID" value="CAB54858.1"/>
    <property type="status" value="JOINED"/>
    <property type="molecule type" value="Genomic_DNA"/>
</dbReference>
<dbReference type="EMBL" id="AJ252570">
    <property type="protein sequence ID" value="CAB54858.1"/>
    <property type="status" value="JOINED"/>
    <property type="molecule type" value="Genomic_DNA"/>
</dbReference>
<dbReference type="EMBL" id="AJ252550">
    <property type="protein sequence ID" value="CAB54857.1"/>
    <property type="molecule type" value="Genomic_DNA"/>
</dbReference>
<dbReference type="EMBL" id="AJ252551">
    <property type="protein sequence ID" value="CAB54857.1"/>
    <property type="status" value="JOINED"/>
    <property type="molecule type" value="Genomic_DNA"/>
</dbReference>
<dbReference type="EMBL" id="AJ252552">
    <property type="protein sequence ID" value="CAB54857.1"/>
    <property type="status" value="JOINED"/>
    <property type="molecule type" value="Genomic_DNA"/>
</dbReference>
<dbReference type="EMBL" id="AJ252553">
    <property type="protein sequence ID" value="CAB54857.1"/>
    <property type="status" value="JOINED"/>
    <property type="molecule type" value="Genomic_DNA"/>
</dbReference>
<dbReference type="EMBL" id="AJ252554">
    <property type="protein sequence ID" value="CAB54857.1"/>
    <property type="status" value="JOINED"/>
    <property type="molecule type" value="Genomic_DNA"/>
</dbReference>
<dbReference type="EMBL" id="AJ252555">
    <property type="protein sequence ID" value="CAB54857.1"/>
    <property type="status" value="JOINED"/>
    <property type="molecule type" value="Genomic_DNA"/>
</dbReference>
<dbReference type="EMBL" id="AJ252556">
    <property type="protein sequence ID" value="CAB54857.1"/>
    <property type="status" value="JOINED"/>
    <property type="molecule type" value="Genomic_DNA"/>
</dbReference>
<dbReference type="EMBL" id="AJ252557">
    <property type="protein sequence ID" value="CAB54857.1"/>
    <property type="status" value="JOINED"/>
    <property type="molecule type" value="Genomic_DNA"/>
</dbReference>
<dbReference type="EMBL" id="AJ252559">
    <property type="protein sequence ID" value="CAB54857.1"/>
    <property type="status" value="JOINED"/>
    <property type="molecule type" value="Genomic_DNA"/>
</dbReference>
<dbReference type="EMBL" id="AJ252560">
    <property type="protein sequence ID" value="CAB54857.1"/>
    <property type="status" value="JOINED"/>
    <property type="molecule type" value="Genomic_DNA"/>
</dbReference>
<dbReference type="EMBL" id="AJ252561">
    <property type="protein sequence ID" value="CAB54857.1"/>
    <property type="status" value="JOINED"/>
    <property type="molecule type" value="Genomic_DNA"/>
</dbReference>
<dbReference type="EMBL" id="AJ252562">
    <property type="protein sequence ID" value="CAB54857.1"/>
    <property type="status" value="JOINED"/>
    <property type="molecule type" value="Genomic_DNA"/>
</dbReference>
<dbReference type="EMBL" id="AJ252563">
    <property type="protein sequence ID" value="CAB54857.1"/>
    <property type="status" value="JOINED"/>
    <property type="molecule type" value="Genomic_DNA"/>
</dbReference>
<dbReference type="EMBL" id="AJ252564">
    <property type="protein sequence ID" value="CAB54857.1"/>
    <property type="status" value="JOINED"/>
    <property type="molecule type" value="Genomic_DNA"/>
</dbReference>
<dbReference type="EMBL" id="AJ252565">
    <property type="protein sequence ID" value="CAB54857.1"/>
    <property type="status" value="JOINED"/>
    <property type="molecule type" value="Genomic_DNA"/>
</dbReference>
<dbReference type="EMBL" id="AJ252566">
    <property type="protein sequence ID" value="CAB54857.1"/>
    <property type="status" value="JOINED"/>
    <property type="molecule type" value="Genomic_DNA"/>
</dbReference>
<dbReference type="EMBL" id="AJ252567">
    <property type="protein sequence ID" value="CAB54857.1"/>
    <property type="status" value="JOINED"/>
    <property type="molecule type" value="Genomic_DNA"/>
</dbReference>
<dbReference type="EMBL" id="AJ252568">
    <property type="protein sequence ID" value="CAB54857.1"/>
    <property type="status" value="JOINED"/>
    <property type="molecule type" value="Genomic_DNA"/>
</dbReference>
<dbReference type="EMBL" id="AJ252570">
    <property type="protein sequence ID" value="CAB54857.1"/>
    <property type="status" value="JOINED"/>
    <property type="molecule type" value="Genomic_DNA"/>
</dbReference>
<dbReference type="EMBL" id="AK313215">
    <property type="protein sequence ID" value="BAG36030.1"/>
    <property type="molecule type" value="mRNA"/>
</dbReference>
<dbReference type="EMBL" id="AC005913">
    <property type="status" value="NOT_ANNOTATED_CDS"/>
    <property type="molecule type" value="Genomic_DNA"/>
</dbReference>
<dbReference type="EMBL" id="AC112496">
    <property type="status" value="NOT_ANNOTATED_CDS"/>
    <property type="molecule type" value="Genomic_DNA"/>
</dbReference>
<dbReference type="EMBL" id="AC117404">
    <property type="status" value="NOT_ANNOTATED_CDS"/>
    <property type="molecule type" value="Genomic_DNA"/>
</dbReference>
<dbReference type="EMBL" id="BC037549">
    <property type="protein sequence ID" value="AAH37549.1"/>
    <property type="molecule type" value="mRNA"/>
</dbReference>
<dbReference type="EMBL" id="BC042421">
    <property type="protein sequence ID" value="AAH42421.1"/>
    <property type="molecule type" value="mRNA"/>
</dbReference>
<dbReference type="EMBL" id="BC071595">
    <property type="protein sequence ID" value="AAH71595.1"/>
    <property type="molecule type" value="mRNA"/>
</dbReference>
<dbReference type="EMBL" id="X68285">
    <property type="protein sequence ID" value="CAA48346.1"/>
    <property type="status" value="ALT_FRAME"/>
    <property type="molecule type" value="mRNA"/>
</dbReference>
<dbReference type="EMBL" id="X69886">
    <property type="protein sequence ID" value="CAA49512.1"/>
    <property type="molecule type" value="mRNA"/>
</dbReference>
<dbReference type="CCDS" id="CCDS14225.1">
    <molecule id="P32189-4"/>
</dbReference>
<dbReference type="CCDS" id="CCDS35224.1">
    <molecule id="P32189-1"/>
</dbReference>
<dbReference type="CCDS" id="CCDS48090.1">
    <molecule id="P32189-2"/>
</dbReference>
<dbReference type="CCDS" id="CCDS75963.1">
    <molecule id="P32189-3"/>
</dbReference>
<dbReference type="PIR" id="I37427">
    <property type="entry name" value="S36175"/>
</dbReference>
<dbReference type="RefSeq" id="NP_000158.1">
    <molecule id="P32189-1"/>
    <property type="nucleotide sequence ID" value="NM_000167.6"/>
</dbReference>
<dbReference type="RefSeq" id="NP_001121599.1">
    <molecule id="P32189-2"/>
    <property type="nucleotide sequence ID" value="NM_001128127.3"/>
</dbReference>
<dbReference type="RefSeq" id="NP_001191948.1">
    <molecule id="P32189-3"/>
    <property type="nucleotide sequence ID" value="NM_001205019.2"/>
</dbReference>
<dbReference type="RefSeq" id="NP_976325.1">
    <molecule id="P32189-4"/>
    <property type="nucleotide sequence ID" value="NM_203391.4"/>
</dbReference>
<dbReference type="SMR" id="P32189"/>
<dbReference type="BioGRID" id="108975">
    <property type="interactions" value="101"/>
</dbReference>
<dbReference type="FunCoup" id="P32189">
    <property type="interactions" value="1995"/>
</dbReference>
<dbReference type="IntAct" id="P32189">
    <property type="interactions" value="63"/>
</dbReference>
<dbReference type="MINT" id="P32189"/>
<dbReference type="STRING" id="9606.ENSP00000401720"/>
<dbReference type="BindingDB" id="P32189"/>
<dbReference type="ChEMBL" id="CHEMBL2300"/>
<dbReference type="MoonDB" id="P32189">
    <property type="type" value="Curated"/>
</dbReference>
<dbReference type="GlyGen" id="P32189">
    <property type="glycosylation" value="1 site, 1 O-linked glycan (1 site)"/>
</dbReference>
<dbReference type="iPTMnet" id="P32189"/>
<dbReference type="PhosphoSitePlus" id="P32189"/>
<dbReference type="SwissPalm" id="P32189"/>
<dbReference type="BioMuta" id="GK"/>
<dbReference type="DMDM" id="205830913"/>
<dbReference type="jPOST" id="P32189"/>
<dbReference type="MassIVE" id="P32189"/>
<dbReference type="PaxDb" id="9606-ENSP00000401720"/>
<dbReference type="PeptideAtlas" id="P32189"/>
<dbReference type="ProteomicsDB" id="1347"/>
<dbReference type="ProteomicsDB" id="54841">
    <molecule id="P32189-3"/>
</dbReference>
<dbReference type="ProteomicsDB" id="54842">
    <molecule id="P32189-1"/>
</dbReference>
<dbReference type="ProteomicsDB" id="54843">
    <molecule id="P32189-2"/>
</dbReference>
<dbReference type="Pumba" id="P32189"/>
<dbReference type="Antibodypedia" id="10331">
    <property type="antibodies" value="327 antibodies from 34 providers"/>
</dbReference>
<dbReference type="DNASU" id="2710"/>
<dbReference type="Ensembl" id="ENST00000378943.7">
    <molecule id="P32189-2"/>
    <property type="protein sequence ID" value="ENSP00000368226.3"/>
    <property type="gene ID" value="ENSG00000198814.14"/>
</dbReference>
<dbReference type="Ensembl" id="ENST00000378945.7">
    <molecule id="P32189-1"/>
    <property type="protein sequence ID" value="ENSP00000368228.3"/>
    <property type="gene ID" value="ENSG00000198814.14"/>
</dbReference>
<dbReference type="Ensembl" id="ENST00000378946.7">
    <molecule id="P32189-4"/>
    <property type="protein sequence ID" value="ENSP00000368229.3"/>
    <property type="gene ID" value="ENSG00000198814.14"/>
</dbReference>
<dbReference type="Ensembl" id="ENST00000427190.6">
    <molecule id="P32189-3"/>
    <property type="protein sequence ID" value="ENSP00000401720.2"/>
    <property type="gene ID" value="ENSG00000198814.14"/>
</dbReference>
<dbReference type="GeneID" id="2710"/>
<dbReference type="KEGG" id="hsa:2710"/>
<dbReference type="MANE-Select" id="ENST00000427190.6">
    <property type="protein sequence ID" value="ENSP00000401720.2"/>
    <property type="RefSeq nucleotide sequence ID" value="NM_001205019.2"/>
    <property type="RefSeq protein sequence ID" value="NP_001191948.1"/>
</dbReference>
<dbReference type="UCSC" id="uc004dch.5">
    <molecule id="P32189-3"/>
    <property type="organism name" value="human"/>
</dbReference>
<dbReference type="AGR" id="HGNC:4289"/>
<dbReference type="CTD" id="2710"/>
<dbReference type="DisGeNET" id="2710"/>
<dbReference type="GeneCards" id="GK"/>
<dbReference type="GeneReviews" id="GK"/>
<dbReference type="HGNC" id="HGNC:4289">
    <property type="gene designation" value="GK"/>
</dbReference>
<dbReference type="HPA" id="ENSG00000198814">
    <property type="expression patterns" value="Tissue enhanced (intestine, kidney, liver)"/>
</dbReference>
<dbReference type="MalaCards" id="GK"/>
<dbReference type="MIM" id="300474">
    <property type="type" value="gene"/>
</dbReference>
<dbReference type="MIM" id="307030">
    <property type="type" value="phenotype"/>
</dbReference>
<dbReference type="neXtProt" id="NX_P32189"/>
<dbReference type="OpenTargets" id="ENSG00000198814"/>
<dbReference type="Orphanet" id="284414">
    <property type="disease" value="Glycerol kinase deficiency, adult form"/>
</dbReference>
<dbReference type="Orphanet" id="284411">
    <property type="disease" value="Glycerol kinase deficiency, juvenile form"/>
</dbReference>
<dbReference type="PharmGKB" id="PA28700"/>
<dbReference type="VEuPathDB" id="HostDB:ENSG00000198814"/>
<dbReference type="eggNOG" id="KOG2517">
    <property type="taxonomic scope" value="Eukaryota"/>
</dbReference>
<dbReference type="GeneTree" id="ENSGT01000000214434"/>
<dbReference type="HOGENOM" id="CLU_009281_2_2_1"/>
<dbReference type="InParanoid" id="P32189"/>
<dbReference type="OMA" id="FMLMNIG"/>
<dbReference type="OrthoDB" id="5422795at2759"/>
<dbReference type="PAN-GO" id="P32189">
    <property type="GO annotations" value="6 GO annotations based on evolutionary models"/>
</dbReference>
<dbReference type="PhylomeDB" id="P32189"/>
<dbReference type="TreeFam" id="TF321504"/>
<dbReference type="BRENDA" id="2.7.1.30">
    <property type="organism ID" value="2681"/>
</dbReference>
<dbReference type="PathwayCommons" id="P32189"/>
<dbReference type="Reactome" id="R-HSA-75109">
    <property type="pathway name" value="Triglyceride biosynthesis"/>
</dbReference>
<dbReference type="SignaLink" id="P32189"/>
<dbReference type="SIGNOR" id="P32189"/>
<dbReference type="UniPathway" id="UPA00618">
    <property type="reaction ID" value="UER00672"/>
</dbReference>
<dbReference type="BioGRID-ORCS" id="2710">
    <property type="hits" value="11 hits in 787 CRISPR screens"/>
</dbReference>
<dbReference type="CD-CODE" id="FB4E32DD">
    <property type="entry name" value="Presynaptic clusters and postsynaptic densities"/>
</dbReference>
<dbReference type="ChiTaRS" id="GK">
    <property type="organism name" value="human"/>
</dbReference>
<dbReference type="GenomeRNAi" id="2710"/>
<dbReference type="Pharos" id="P32189">
    <property type="development level" value="Tbio"/>
</dbReference>
<dbReference type="PRO" id="PR:P32189"/>
<dbReference type="Proteomes" id="UP000005640">
    <property type="component" value="Chromosome X"/>
</dbReference>
<dbReference type="RNAct" id="P32189">
    <property type="molecule type" value="protein"/>
</dbReference>
<dbReference type="Bgee" id="ENSG00000198814">
    <property type="expression patterns" value="Expressed in jejunal mucosa and 164 other cell types or tissues"/>
</dbReference>
<dbReference type="ExpressionAtlas" id="P32189">
    <property type="expression patterns" value="baseline and differential"/>
</dbReference>
<dbReference type="GO" id="GO:0005829">
    <property type="term" value="C:cytosol"/>
    <property type="evidence" value="ECO:0000314"/>
    <property type="project" value="UniProtKB"/>
</dbReference>
<dbReference type="GO" id="GO:0070062">
    <property type="term" value="C:extracellular exosome"/>
    <property type="evidence" value="ECO:0007005"/>
    <property type="project" value="UniProtKB"/>
</dbReference>
<dbReference type="GO" id="GO:0005741">
    <property type="term" value="C:mitochondrial outer membrane"/>
    <property type="evidence" value="ECO:0007669"/>
    <property type="project" value="UniProtKB-SubCell"/>
</dbReference>
<dbReference type="GO" id="GO:0005739">
    <property type="term" value="C:mitochondrion"/>
    <property type="evidence" value="ECO:0006056"/>
    <property type="project" value="FlyBase"/>
</dbReference>
<dbReference type="GO" id="GO:0005634">
    <property type="term" value="C:nucleus"/>
    <property type="evidence" value="ECO:0000314"/>
    <property type="project" value="UniProtKB"/>
</dbReference>
<dbReference type="GO" id="GO:0005524">
    <property type="term" value="F:ATP binding"/>
    <property type="evidence" value="ECO:0007669"/>
    <property type="project" value="UniProtKB-KW"/>
</dbReference>
<dbReference type="GO" id="GO:0004370">
    <property type="term" value="F:glycerol kinase activity"/>
    <property type="evidence" value="ECO:0000314"/>
    <property type="project" value="UniProtKB"/>
</dbReference>
<dbReference type="GO" id="GO:0046872">
    <property type="term" value="F:metal ion binding"/>
    <property type="evidence" value="ECO:0007669"/>
    <property type="project" value="UniProtKB-KW"/>
</dbReference>
<dbReference type="GO" id="GO:0019563">
    <property type="term" value="P:glycerol catabolic process"/>
    <property type="evidence" value="ECO:0007669"/>
    <property type="project" value="UniProtKB-UniPathway"/>
</dbReference>
<dbReference type="GO" id="GO:0006071">
    <property type="term" value="P:glycerol metabolic process"/>
    <property type="evidence" value="ECO:0000315"/>
    <property type="project" value="BHF-UCL"/>
</dbReference>
<dbReference type="GO" id="GO:0046167">
    <property type="term" value="P:glycerol-3-phosphate biosynthetic process"/>
    <property type="evidence" value="ECO:0000314"/>
    <property type="project" value="UniProtKB"/>
</dbReference>
<dbReference type="GO" id="GO:0019432">
    <property type="term" value="P:triglyceride biosynthetic process"/>
    <property type="evidence" value="ECO:0000304"/>
    <property type="project" value="Reactome"/>
</dbReference>
<dbReference type="GO" id="GO:0006641">
    <property type="term" value="P:triglyceride metabolic process"/>
    <property type="evidence" value="ECO:0000315"/>
    <property type="project" value="BHF-UCL"/>
</dbReference>
<dbReference type="CDD" id="cd07792">
    <property type="entry name" value="ASKHA_NBD_FGGY_GK1-3-like"/>
    <property type="match status" value="1"/>
</dbReference>
<dbReference type="FunFam" id="3.30.420.40:FF:000043">
    <property type="entry name" value="glycerol kinase isoform X1"/>
    <property type="match status" value="1"/>
</dbReference>
<dbReference type="FunFam" id="3.30.420.40:FF:000033">
    <property type="entry name" value="glycerol kinase isoform X2"/>
    <property type="match status" value="1"/>
</dbReference>
<dbReference type="Gene3D" id="3.30.420.40">
    <property type="match status" value="2"/>
</dbReference>
<dbReference type="InterPro" id="IPR043129">
    <property type="entry name" value="ATPase_NBD"/>
</dbReference>
<dbReference type="InterPro" id="IPR000577">
    <property type="entry name" value="Carb_kinase_FGGY"/>
</dbReference>
<dbReference type="InterPro" id="IPR018483">
    <property type="entry name" value="Carb_kinase_FGGY_CS"/>
</dbReference>
<dbReference type="InterPro" id="IPR018485">
    <property type="entry name" value="FGGY_C"/>
</dbReference>
<dbReference type="InterPro" id="IPR018484">
    <property type="entry name" value="FGGY_N"/>
</dbReference>
<dbReference type="InterPro" id="IPR042018">
    <property type="entry name" value="GK1-3_metazoan-type"/>
</dbReference>
<dbReference type="InterPro" id="IPR005999">
    <property type="entry name" value="Glycerol_kin"/>
</dbReference>
<dbReference type="NCBIfam" id="TIGR01311">
    <property type="entry name" value="glycerol_kin"/>
    <property type="match status" value="1"/>
</dbReference>
<dbReference type="NCBIfam" id="NF000756">
    <property type="entry name" value="PRK00047.1"/>
    <property type="match status" value="1"/>
</dbReference>
<dbReference type="PANTHER" id="PTHR10196:SF56">
    <property type="entry name" value="GLYCEROL KINASE"/>
    <property type="match status" value="1"/>
</dbReference>
<dbReference type="PANTHER" id="PTHR10196">
    <property type="entry name" value="SUGAR KINASE"/>
    <property type="match status" value="1"/>
</dbReference>
<dbReference type="Pfam" id="PF02782">
    <property type="entry name" value="FGGY_C"/>
    <property type="match status" value="1"/>
</dbReference>
<dbReference type="Pfam" id="PF00370">
    <property type="entry name" value="FGGY_N"/>
    <property type="match status" value="1"/>
</dbReference>
<dbReference type="PIRSF" id="PIRSF000538">
    <property type="entry name" value="GlpK"/>
    <property type="match status" value="1"/>
</dbReference>
<dbReference type="SUPFAM" id="SSF53067">
    <property type="entry name" value="Actin-like ATPase domain"/>
    <property type="match status" value="2"/>
</dbReference>
<dbReference type="PROSITE" id="PS00933">
    <property type="entry name" value="FGGY_KINASES_1"/>
    <property type="match status" value="1"/>
</dbReference>
<dbReference type="PROSITE" id="PS00445">
    <property type="entry name" value="FGGY_KINASES_2"/>
    <property type="match status" value="1"/>
</dbReference>
<gene>
    <name evidence="18" type="primary">GK</name>
</gene>
<keyword id="KW-0025">Alternative splicing</keyword>
<keyword id="KW-0067">ATP-binding</keyword>
<keyword id="KW-0963">Cytoplasm</keyword>
<keyword id="KW-0225">Disease variant</keyword>
<keyword id="KW-0319">Glycerol metabolism</keyword>
<keyword id="KW-0418">Kinase</keyword>
<keyword id="KW-0472">Membrane</keyword>
<keyword id="KW-0479">Metal-binding</keyword>
<keyword id="KW-0496">Mitochondrion</keyword>
<keyword id="KW-1000">Mitochondrion outer membrane</keyword>
<keyword id="KW-0547">Nucleotide-binding</keyword>
<keyword id="KW-0539">Nucleus</keyword>
<keyword id="KW-1267">Proteomics identification</keyword>
<keyword id="KW-1185">Reference proteome</keyword>
<keyword id="KW-0808">Transferase</keyword>
<keyword id="KW-0812">Transmembrane</keyword>
<keyword id="KW-1133">Transmembrane helix</keyword>
<keyword id="KW-0862">Zinc</keyword>
<reference key="1">
    <citation type="journal article" date="1993" name="Nat. Genet.">
        <title>Genomic scanning for expressed sequences in Xp21 identifies the glycerol kinase gene.</title>
        <authorList>
            <person name="Guo W."/>
            <person name="Worley K.C."/>
            <person name="Adams V."/>
            <person name="Mason J."/>
            <person name="Sylvester-Jackson D.E."/>
            <person name="Zhang Y.-H."/>
            <person name="Towbin J.A."/>
            <person name="Fogt D.D."/>
            <person name="Madu S."/>
            <person name="Wheeler D.A."/>
            <person name="McCabe E.R.B."/>
        </authorList>
    </citation>
    <scope>NUCLEOTIDE SEQUENCE [MRNA] (ISOFORM 1)</scope>
    <scope>FUNCTION</scope>
    <scope>CATALYTIC ACTIVITY</scope>
    <source>
        <tissue>Liver</tissue>
    </source>
</reference>
<reference key="2">
    <citation type="journal article" date="1994" name="Hum. Mol. Genet.">
        <title>The glycerol kinase gene family: structure of the Xp gene, and related intronless retroposons.</title>
        <authorList>
            <person name="Sargent C.A."/>
            <person name="Young C."/>
            <person name="Marsh S."/>
            <person name="Ferguson-Smith M.A."/>
            <person name="Affara N.A."/>
        </authorList>
    </citation>
    <scope>NUCLEOTIDE SEQUENCE [GENOMIC DNA / MRNA] (ISOFORM 2)</scope>
    <source>
        <tissue>Fetal brain</tissue>
    </source>
</reference>
<reference key="3">
    <citation type="journal article" date="2000" name="J. Med. Genet.">
        <title>Five cases of isolated glycerol kinase deficiency, including two families: failure to find genotype:phenotype correlation.</title>
        <authorList>
            <person name="Sargent C.A."/>
            <person name="Kidd A."/>
            <person name="Moore S."/>
            <person name="Dean J."/>
            <person name="Besley G.T.N."/>
            <person name="Affara N.A."/>
        </authorList>
    </citation>
    <scope>NUCLEOTIDE SEQUENCE [GENOMIC DNA] (ISOFORM 3)</scope>
</reference>
<reference key="4">
    <citation type="journal article" date="2004" name="Nat. Genet.">
        <title>Complete sequencing and characterization of 21,243 full-length human cDNAs.</title>
        <authorList>
            <person name="Ota T."/>
            <person name="Suzuki Y."/>
            <person name="Nishikawa T."/>
            <person name="Otsuki T."/>
            <person name="Sugiyama T."/>
            <person name="Irie R."/>
            <person name="Wakamatsu A."/>
            <person name="Hayashi K."/>
            <person name="Sato H."/>
            <person name="Nagai K."/>
            <person name="Kimura K."/>
            <person name="Makita H."/>
            <person name="Sekine M."/>
            <person name="Obayashi M."/>
            <person name="Nishi T."/>
            <person name="Shibahara T."/>
            <person name="Tanaka T."/>
            <person name="Ishii S."/>
            <person name="Yamamoto J."/>
            <person name="Saito K."/>
            <person name="Kawai Y."/>
            <person name="Isono Y."/>
            <person name="Nakamura Y."/>
            <person name="Nagahari K."/>
            <person name="Murakami K."/>
            <person name="Yasuda T."/>
            <person name="Iwayanagi T."/>
            <person name="Wagatsuma M."/>
            <person name="Shiratori A."/>
            <person name="Sudo H."/>
            <person name="Hosoiri T."/>
            <person name="Kaku Y."/>
            <person name="Kodaira H."/>
            <person name="Kondo H."/>
            <person name="Sugawara M."/>
            <person name="Takahashi M."/>
            <person name="Kanda K."/>
            <person name="Yokoi T."/>
            <person name="Furuya T."/>
            <person name="Kikkawa E."/>
            <person name="Omura Y."/>
            <person name="Abe K."/>
            <person name="Kamihara K."/>
            <person name="Katsuta N."/>
            <person name="Sato K."/>
            <person name="Tanikawa M."/>
            <person name="Yamazaki M."/>
            <person name="Ninomiya K."/>
            <person name="Ishibashi T."/>
            <person name="Yamashita H."/>
            <person name="Murakawa K."/>
            <person name="Fujimori K."/>
            <person name="Tanai H."/>
            <person name="Kimata M."/>
            <person name="Watanabe M."/>
            <person name="Hiraoka S."/>
            <person name="Chiba Y."/>
            <person name="Ishida S."/>
            <person name="Ono Y."/>
            <person name="Takiguchi S."/>
            <person name="Watanabe S."/>
            <person name="Yosida M."/>
            <person name="Hotuta T."/>
            <person name="Kusano J."/>
            <person name="Kanehori K."/>
            <person name="Takahashi-Fujii A."/>
            <person name="Hara H."/>
            <person name="Tanase T.-O."/>
            <person name="Nomura Y."/>
            <person name="Togiya S."/>
            <person name="Komai F."/>
            <person name="Hara R."/>
            <person name="Takeuchi K."/>
            <person name="Arita M."/>
            <person name="Imose N."/>
            <person name="Musashino K."/>
            <person name="Yuuki H."/>
            <person name="Oshima A."/>
            <person name="Sasaki N."/>
            <person name="Aotsuka S."/>
            <person name="Yoshikawa Y."/>
            <person name="Matsunawa H."/>
            <person name="Ichihara T."/>
            <person name="Shiohata N."/>
            <person name="Sano S."/>
            <person name="Moriya S."/>
            <person name="Momiyama H."/>
            <person name="Satoh N."/>
            <person name="Takami S."/>
            <person name="Terashima Y."/>
            <person name="Suzuki O."/>
            <person name="Nakagawa S."/>
            <person name="Senoh A."/>
            <person name="Mizoguchi H."/>
            <person name="Goto Y."/>
            <person name="Shimizu F."/>
            <person name="Wakebe H."/>
            <person name="Hishigaki H."/>
            <person name="Watanabe T."/>
            <person name="Sugiyama A."/>
            <person name="Takemoto M."/>
            <person name="Kawakami B."/>
            <person name="Yamazaki M."/>
            <person name="Watanabe K."/>
            <person name="Kumagai A."/>
            <person name="Itakura S."/>
            <person name="Fukuzumi Y."/>
            <person name="Fujimori Y."/>
            <person name="Komiyama M."/>
            <person name="Tashiro H."/>
            <person name="Tanigami A."/>
            <person name="Fujiwara T."/>
            <person name="Ono T."/>
            <person name="Yamada K."/>
            <person name="Fujii Y."/>
            <person name="Ozaki K."/>
            <person name="Hirao M."/>
            <person name="Ohmori Y."/>
            <person name="Kawabata A."/>
            <person name="Hikiji T."/>
            <person name="Kobatake N."/>
            <person name="Inagaki H."/>
            <person name="Ikema Y."/>
            <person name="Okamoto S."/>
            <person name="Okitani R."/>
            <person name="Kawakami T."/>
            <person name="Noguchi S."/>
            <person name="Itoh T."/>
            <person name="Shigeta K."/>
            <person name="Senba T."/>
            <person name="Matsumura K."/>
            <person name="Nakajima Y."/>
            <person name="Mizuno T."/>
            <person name="Morinaga M."/>
            <person name="Sasaki M."/>
            <person name="Togashi T."/>
            <person name="Oyama M."/>
            <person name="Hata H."/>
            <person name="Watanabe M."/>
            <person name="Komatsu T."/>
            <person name="Mizushima-Sugano J."/>
            <person name="Satoh T."/>
            <person name="Shirai Y."/>
            <person name="Takahashi Y."/>
            <person name="Nakagawa K."/>
            <person name="Okumura K."/>
            <person name="Nagase T."/>
            <person name="Nomura N."/>
            <person name="Kikuchi H."/>
            <person name="Masuho Y."/>
            <person name="Yamashita R."/>
            <person name="Nakai K."/>
            <person name="Yada T."/>
            <person name="Nakamura Y."/>
            <person name="Ohara O."/>
            <person name="Isogai T."/>
            <person name="Sugano S."/>
        </authorList>
    </citation>
    <scope>NUCLEOTIDE SEQUENCE [LARGE SCALE MRNA] (ISOFORM 1)</scope>
</reference>
<reference key="5">
    <citation type="journal article" date="2005" name="Nature">
        <title>The DNA sequence of the human X chromosome.</title>
        <authorList>
            <person name="Ross M.T."/>
            <person name="Grafham D.V."/>
            <person name="Coffey A.J."/>
            <person name="Scherer S."/>
            <person name="McLay K."/>
            <person name="Muzny D."/>
            <person name="Platzer M."/>
            <person name="Howell G.R."/>
            <person name="Burrows C."/>
            <person name="Bird C.P."/>
            <person name="Frankish A."/>
            <person name="Lovell F.L."/>
            <person name="Howe K.L."/>
            <person name="Ashurst J.L."/>
            <person name="Fulton R.S."/>
            <person name="Sudbrak R."/>
            <person name="Wen G."/>
            <person name="Jones M.C."/>
            <person name="Hurles M.E."/>
            <person name="Andrews T.D."/>
            <person name="Scott C.E."/>
            <person name="Searle S."/>
            <person name="Ramser J."/>
            <person name="Whittaker A."/>
            <person name="Deadman R."/>
            <person name="Carter N.P."/>
            <person name="Hunt S.E."/>
            <person name="Chen R."/>
            <person name="Cree A."/>
            <person name="Gunaratne P."/>
            <person name="Havlak P."/>
            <person name="Hodgson A."/>
            <person name="Metzker M.L."/>
            <person name="Richards S."/>
            <person name="Scott G."/>
            <person name="Steffen D."/>
            <person name="Sodergren E."/>
            <person name="Wheeler D.A."/>
            <person name="Worley K.C."/>
            <person name="Ainscough R."/>
            <person name="Ambrose K.D."/>
            <person name="Ansari-Lari M.A."/>
            <person name="Aradhya S."/>
            <person name="Ashwell R.I."/>
            <person name="Babbage A.K."/>
            <person name="Bagguley C.L."/>
            <person name="Ballabio A."/>
            <person name="Banerjee R."/>
            <person name="Barker G.E."/>
            <person name="Barlow K.F."/>
            <person name="Barrett I.P."/>
            <person name="Bates K.N."/>
            <person name="Beare D.M."/>
            <person name="Beasley H."/>
            <person name="Beasley O."/>
            <person name="Beck A."/>
            <person name="Bethel G."/>
            <person name="Blechschmidt K."/>
            <person name="Brady N."/>
            <person name="Bray-Allen S."/>
            <person name="Bridgeman A.M."/>
            <person name="Brown A.J."/>
            <person name="Brown M.J."/>
            <person name="Bonnin D."/>
            <person name="Bruford E.A."/>
            <person name="Buhay C."/>
            <person name="Burch P."/>
            <person name="Burford D."/>
            <person name="Burgess J."/>
            <person name="Burrill W."/>
            <person name="Burton J."/>
            <person name="Bye J.M."/>
            <person name="Carder C."/>
            <person name="Carrel L."/>
            <person name="Chako J."/>
            <person name="Chapman J.C."/>
            <person name="Chavez D."/>
            <person name="Chen E."/>
            <person name="Chen G."/>
            <person name="Chen Y."/>
            <person name="Chen Z."/>
            <person name="Chinault C."/>
            <person name="Ciccodicola A."/>
            <person name="Clark S.Y."/>
            <person name="Clarke G."/>
            <person name="Clee C.M."/>
            <person name="Clegg S."/>
            <person name="Clerc-Blankenburg K."/>
            <person name="Clifford K."/>
            <person name="Cobley V."/>
            <person name="Cole C.G."/>
            <person name="Conquer J.S."/>
            <person name="Corby N."/>
            <person name="Connor R.E."/>
            <person name="David R."/>
            <person name="Davies J."/>
            <person name="Davis C."/>
            <person name="Davis J."/>
            <person name="Delgado O."/>
            <person name="Deshazo D."/>
            <person name="Dhami P."/>
            <person name="Ding Y."/>
            <person name="Dinh H."/>
            <person name="Dodsworth S."/>
            <person name="Draper H."/>
            <person name="Dugan-Rocha S."/>
            <person name="Dunham A."/>
            <person name="Dunn M."/>
            <person name="Durbin K.J."/>
            <person name="Dutta I."/>
            <person name="Eades T."/>
            <person name="Ellwood M."/>
            <person name="Emery-Cohen A."/>
            <person name="Errington H."/>
            <person name="Evans K.L."/>
            <person name="Faulkner L."/>
            <person name="Francis F."/>
            <person name="Frankland J."/>
            <person name="Fraser A.E."/>
            <person name="Galgoczy P."/>
            <person name="Gilbert J."/>
            <person name="Gill R."/>
            <person name="Gloeckner G."/>
            <person name="Gregory S.G."/>
            <person name="Gribble S."/>
            <person name="Griffiths C."/>
            <person name="Grocock R."/>
            <person name="Gu Y."/>
            <person name="Gwilliam R."/>
            <person name="Hamilton C."/>
            <person name="Hart E.A."/>
            <person name="Hawes A."/>
            <person name="Heath P.D."/>
            <person name="Heitmann K."/>
            <person name="Hennig S."/>
            <person name="Hernandez J."/>
            <person name="Hinzmann B."/>
            <person name="Ho S."/>
            <person name="Hoffs M."/>
            <person name="Howden P.J."/>
            <person name="Huckle E.J."/>
            <person name="Hume J."/>
            <person name="Hunt P.J."/>
            <person name="Hunt A.R."/>
            <person name="Isherwood J."/>
            <person name="Jacob L."/>
            <person name="Johnson D."/>
            <person name="Jones S."/>
            <person name="de Jong P.J."/>
            <person name="Joseph S.S."/>
            <person name="Keenan S."/>
            <person name="Kelly S."/>
            <person name="Kershaw J.K."/>
            <person name="Khan Z."/>
            <person name="Kioschis P."/>
            <person name="Klages S."/>
            <person name="Knights A.J."/>
            <person name="Kosiura A."/>
            <person name="Kovar-Smith C."/>
            <person name="Laird G.K."/>
            <person name="Langford C."/>
            <person name="Lawlor S."/>
            <person name="Leversha M."/>
            <person name="Lewis L."/>
            <person name="Liu W."/>
            <person name="Lloyd C."/>
            <person name="Lloyd D.M."/>
            <person name="Loulseged H."/>
            <person name="Loveland J.E."/>
            <person name="Lovell J.D."/>
            <person name="Lozado R."/>
            <person name="Lu J."/>
            <person name="Lyne R."/>
            <person name="Ma J."/>
            <person name="Maheshwari M."/>
            <person name="Matthews L.H."/>
            <person name="McDowall J."/>
            <person name="McLaren S."/>
            <person name="McMurray A."/>
            <person name="Meidl P."/>
            <person name="Meitinger T."/>
            <person name="Milne S."/>
            <person name="Miner G."/>
            <person name="Mistry S.L."/>
            <person name="Morgan M."/>
            <person name="Morris S."/>
            <person name="Mueller I."/>
            <person name="Mullikin J.C."/>
            <person name="Nguyen N."/>
            <person name="Nordsiek G."/>
            <person name="Nyakatura G."/>
            <person name="O'dell C.N."/>
            <person name="Okwuonu G."/>
            <person name="Palmer S."/>
            <person name="Pandian R."/>
            <person name="Parker D."/>
            <person name="Parrish J."/>
            <person name="Pasternak S."/>
            <person name="Patel D."/>
            <person name="Pearce A.V."/>
            <person name="Pearson D.M."/>
            <person name="Pelan S.E."/>
            <person name="Perez L."/>
            <person name="Porter K.M."/>
            <person name="Ramsey Y."/>
            <person name="Reichwald K."/>
            <person name="Rhodes S."/>
            <person name="Ridler K.A."/>
            <person name="Schlessinger D."/>
            <person name="Schueler M.G."/>
            <person name="Sehra H.K."/>
            <person name="Shaw-Smith C."/>
            <person name="Shen H."/>
            <person name="Sheridan E.M."/>
            <person name="Shownkeen R."/>
            <person name="Skuce C.D."/>
            <person name="Smith M.L."/>
            <person name="Sotheran E.C."/>
            <person name="Steingruber H.E."/>
            <person name="Steward C.A."/>
            <person name="Storey R."/>
            <person name="Swann R.M."/>
            <person name="Swarbreck D."/>
            <person name="Tabor P.E."/>
            <person name="Taudien S."/>
            <person name="Taylor T."/>
            <person name="Teague B."/>
            <person name="Thomas K."/>
            <person name="Thorpe A."/>
            <person name="Timms K."/>
            <person name="Tracey A."/>
            <person name="Trevanion S."/>
            <person name="Tromans A.C."/>
            <person name="d'Urso M."/>
            <person name="Verduzco D."/>
            <person name="Villasana D."/>
            <person name="Waldron L."/>
            <person name="Wall M."/>
            <person name="Wang Q."/>
            <person name="Warren J."/>
            <person name="Warry G.L."/>
            <person name="Wei X."/>
            <person name="West A."/>
            <person name="Whitehead S.L."/>
            <person name="Whiteley M.N."/>
            <person name="Wilkinson J.E."/>
            <person name="Willey D.L."/>
            <person name="Williams G."/>
            <person name="Williams L."/>
            <person name="Williamson A."/>
            <person name="Williamson H."/>
            <person name="Wilming L."/>
            <person name="Woodmansey R.L."/>
            <person name="Wray P.W."/>
            <person name="Yen J."/>
            <person name="Zhang J."/>
            <person name="Zhou J."/>
            <person name="Zoghbi H."/>
            <person name="Zorilla S."/>
            <person name="Buck D."/>
            <person name="Reinhardt R."/>
            <person name="Poustka A."/>
            <person name="Rosenthal A."/>
            <person name="Lehrach H."/>
            <person name="Meindl A."/>
            <person name="Minx P.J."/>
            <person name="Hillier L.W."/>
            <person name="Willard H.F."/>
            <person name="Wilson R.K."/>
            <person name="Waterston R.H."/>
            <person name="Rice C.M."/>
            <person name="Vaudin M."/>
            <person name="Coulson A."/>
            <person name="Nelson D.L."/>
            <person name="Weinstock G."/>
            <person name="Sulston J.E."/>
            <person name="Durbin R.M."/>
            <person name="Hubbard T."/>
            <person name="Gibbs R.A."/>
            <person name="Beck S."/>
            <person name="Rogers J."/>
            <person name="Bentley D.R."/>
        </authorList>
    </citation>
    <scope>NUCLEOTIDE SEQUENCE [LARGE SCALE GENOMIC DNA]</scope>
</reference>
<reference key="6">
    <citation type="journal article" date="2004" name="Genome Res.">
        <title>The status, quality, and expansion of the NIH full-length cDNA project: the Mammalian Gene Collection (MGC).</title>
        <authorList>
            <consortium name="The MGC Project Team"/>
        </authorList>
    </citation>
    <scope>NUCLEOTIDE SEQUENCE [LARGE SCALE MRNA] (ISOFORMS 1; 3 AND 4)</scope>
    <scope>VARIANTS LYS-79 AND THR-131</scope>
    <source>
        <tissue>Blood</tissue>
        <tissue>Brain</tissue>
    </source>
</reference>
<reference key="7">
    <citation type="journal article" date="1993" name="Hum. Mol. Genet.">
        <title>Cloning of the X-linked glycerol kinase deficiency gene and its identification by sequence comparison to the Bacillus subtilis homologue.</title>
        <authorList>
            <person name="Sargent C.A."/>
            <person name="Affara N.A."/>
            <person name="Bentley E."/>
            <person name="Pelmear A."/>
            <person name="Bailey D.M.D."/>
            <person name="Davey P."/>
            <person name="Dow D."/>
            <person name="Leversha M."/>
            <person name="Aplin H."/>
            <person name="Besley G.T.N."/>
            <person name="Ferguson-Smith M.A."/>
        </authorList>
    </citation>
    <scope>NUCLEOTIDE SEQUENCE [MRNA] OF 77-559 (ISOFORM 3)</scope>
    <source>
        <tissue>Fetal brain</tissue>
    </source>
</reference>
<reference key="8">
    <citation type="journal article" date="1993" name="Hum. Mol. Genet.">
        <title>Isolation of the human Xp21 glycerol kinase gene by positional cloning.</title>
        <authorList>
            <person name="Walker A.P."/>
            <person name="Muscatelli F."/>
            <person name="Monaco A.P."/>
        </authorList>
    </citation>
    <scope>NUCLEOTIDE SEQUENCE [MRNA] OF 130-559 (ISOFORM 1)</scope>
    <source>
        <tissue>Fetal liver</tissue>
    </source>
</reference>
<reference key="9">
    <citation type="journal article" date="2005" name="Biochem. Biophys. Res. Commun.">
        <title>Human and murine glycerol kinase: influence of exon 18 alternative splicing on function.</title>
        <authorList>
            <person name="Ohira R.H."/>
            <person name="Dipple K.M."/>
            <person name="Zhang Y.H."/>
            <person name="McCabe E.R."/>
        </authorList>
    </citation>
    <scope>FUNCTION</scope>
    <scope>CATALYTIC ACTIVITY</scope>
    <scope>PATHWAY</scope>
    <scope>SUBCELLULAR LOCATION (ISOFORMS 3 AND 4)</scope>
    <scope>TISSUE SPECIFICITY (ISOFORMS 2; 3 AND 4)</scope>
</reference>
<reference key="10">
    <citation type="journal article" date="2023" name="Biosci. Rep.">
        <title>Expression and characterisation of human glycerol kinase: the role of solubilising agents and molecular chaperones.</title>
        <authorList>
            <person name="Rani R.M."/>
            <person name="Syngkli S."/>
            <person name="Nongkhlaw J."/>
            <person name="Das B."/>
        </authorList>
    </citation>
    <scope>FUNCTION</scope>
    <scope>CATALYTIC ACTIVITY</scope>
    <scope>ACTIVITY REGULATION</scope>
    <scope>BIOPHYSICOCHEMICAL PROPERTIES</scope>
    <scope>PATHWAY</scope>
</reference>
<reference key="11">
    <citation type="journal article" date="1996" name="Am. J. Hum. Genet.">
        <title>Mutations and phenotype in isolated glycerol kinase deficiency.</title>
        <authorList>
            <person name="Walker A.P."/>
            <person name="Muscatelli F."/>
            <person name="Stafford A.N."/>
            <person name="Chelly J."/>
            <person name="Dahl N."/>
            <person name="Blomquist H.K."/>
            <person name="Delanghe J."/>
            <person name="Willems P.J."/>
            <person name="Steinmann B."/>
            <person name="Monaco A.P."/>
        </authorList>
    </citation>
    <scope>VARIANT GKD VAL-446</scope>
</reference>
<reference key="12">
    <citation type="journal article" date="1998" name="J. Med. Genet.">
        <title>Clinical heterogeneity and novel mutations in the glycerol kinase gene in three families with isolated glycerol kinase deficiency.</title>
        <authorList>
            <person name="Sjarif D.R."/>
            <person name="Sinke R.J."/>
            <person name="Duran M."/>
            <person name="Beemer F.A."/>
            <person name="Kleijer W.J."/>
            <person name="Ploos van Amstel J.K."/>
            <person name="Poll-The B.T."/>
        </authorList>
    </citation>
    <scope>VARIANT GKD ARG-509</scope>
</reference>
<reference key="13">
    <citation type="journal article" date="2000" name="Am. J. Hum. Genet.">
        <title>Glycerol as a correlate of impaired glucose tolerance: dissection of a complex system by use of a simple genetic trait.</title>
        <authorList>
            <person name="Gaudet D."/>
            <person name="Arsenault S."/>
            <person name="Perusse L."/>
            <person name="Vohl M.C."/>
            <person name="St Pierre J."/>
            <person name="Bergeron J."/>
            <person name="Despres J.P."/>
            <person name="Dewar K."/>
            <person name="Daly M.J."/>
            <person name="Hudson T."/>
            <person name="Rioux J.D."/>
        </authorList>
    </citation>
    <scope>VARIANT GKD ASP-294</scope>
</reference>
<evidence type="ECO:0000250" key="1">
    <source>
        <dbReference type="UniProtKB" id="P0A6F3"/>
    </source>
</evidence>
<evidence type="ECO:0000255" key="2"/>
<evidence type="ECO:0000269" key="3">
    <source>
    </source>
</evidence>
<evidence type="ECO:0000269" key="4">
    <source>
    </source>
</evidence>
<evidence type="ECO:0000269" key="5">
    <source>
    </source>
</evidence>
<evidence type="ECO:0000269" key="6">
    <source>
    </source>
</evidence>
<evidence type="ECO:0000269" key="7">
    <source>
    </source>
</evidence>
<evidence type="ECO:0000269" key="8">
    <source>
    </source>
</evidence>
<evidence type="ECO:0000303" key="9">
    <source>
    </source>
</evidence>
<evidence type="ECO:0000303" key="10">
    <source>
    </source>
</evidence>
<evidence type="ECO:0000303" key="11">
    <source>
    </source>
</evidence>
<evidence type="ECO:0000303" key="12">
    <source>
    </source>
</evidence>
<evidence type="ECO:0000303" key="13">
    <source>
    </source>
</evidence>
<evidence type="ECO:0000303" key="14">
    <source>
    </source>
</evidence>
<evidence type="ECO:0000305" key="15"/>
<evidence type="ECO:0000305" key="16">
    <source>
    </source>
</evidence>
<evidence type="ECO:0000305" key="17">
    <source>
    </source>
</evidence>
<evidence type="ECO:0000312" key="18">
    <source>
        <dbReference type="HGNC" id="HGNC:4289"/>
    </source>
</evidence>
<comment type="function">
    <text evidence="5 6">Kinase that plays a key role in glycerol metabolism, catalyzing its phosphorylation to produce sn-glycerol 3-phosphate. Sn-glycerol 3-phosphate is a crucial intermediate in various metabolic pathways, such as the synthesis of glycerolipids and triglycerides, glycogenesis, glycolysis and gluconeogenesis.</text>
</comment>
<comment type="catalytic activity">
    <reaction evidence="5 6">
        <text>glycerol + ATP = sn-glycerol 3-phosphate + ADP + H(+)</text>
        <dbReference type="Rhea" id="RHEA:21644"/>
        <dbReference type="ChEBI" id="CHEBI:15378"/>
        <dbReference type="ChEBI" id="CHEBI:17754"/>
        <dbReference type="ChEBI" id="CHEBI:30616"/>
        <dbReference type="ChEBI" id="CHEBI:57597"/>
        <dbReference type="ChEBI" id="CHEBI:456216"/>
        <dbReference type="EC" id="2.7.1.30"/>
    </reaction>
    <physiologicalReaction direction="left-to-right" evidence="17">
        <dbReference type="Rhea" id="RHEA:21645"/>
    </physiologicalReaction>
</comment>
<comment type="activity regulation">
    <text evidence="6">Potassium and magnesium-dependent.</text>
</comment>
<comment type="biophysicochemical properties">
    <kinetics>
        <KM evidence="6">5.022 uM for glycerol</KM>
        <KM evidence="6">0.767 mM for ATP</KM>
        <KM evidence="6">0.223 mM for phosphoenolpyruvate</KM>
    </kinetics>
    <phDependence>
        <text evidence="6">Optimum pH is 7.7.</text>
    </phDependence>
</comment>
<comment type="pathway">
    <text evidence="16 17">Polyol metabolism; glycerol degradation via glycerol kinase pathway; sn-glycerol 3-phosphate from glycerol: step 1/1.</text>
</comment>
<comment type="interaction">
    <interactant intactId="EBI-3926629">
        <id>P32189</id>
    </interactant>
    <interactant intactId="EBI-721550">
        <id>P22736</id>
        <label>NR4A1</label>
    </interactant>
    <organismsDiffer>false</organismsDiffer>
    <experiments>3</experiments>
</comment>
<comment type="subcellular location">
    <subcellularLocation>
        <location evidence="16">Mitochondrion outer membrane</location>
        <topology evidence="2">Single-pass membrane protein</topology>
    </subcellularLocation>
    <subcellularLocation>
        <location evidence="5">Nucleus</location>
    </subcellularLocation>
    <subcellularLocation>
        <location evidence="16">Cytoplasm</location>
        <location evidence="16">Cytosol</location>
    </subcellularLocation>
    <text evidence="16">Glycerol kinase activity is more cytosolic in some tissues. It probably represents the expression of isoforms lacking a transmembrane domain.</text>
</comment>
<comment type="subcellular location">
    <molecule>Isoform 3</molecule>
    <subcellularLocation>
        <location evidence="16">Mitochondrion outer membrane</location>
        <topology evidence="2">Single-pass membrane protein</topology>
    </subcellularLocation>
    <subcellularLocation>
        <location evidence="5">Nucleus</location>
    </subcellularLocation>
    <text evidence="16">In sperm and fetal tissues, the majority of the activity is associated with mitochondria.</text>
</comment>
<comment type="subcellular location">
    <molecule>Isoform 4</molecule>
    <subcellularLocation>
        <location evidence="16">Cytoplasm</location>
        <location evidence="16">Cytosol</location>
    </subcellularLocation>
    <text evidence="16">In adult tissues, such as liver the glycerol kinase activity is more cytosolic. It probably represents the expression of this isoform which lacks a transmembrane domain.</text>
</comment>
<comment type="alternative products">
    <event type="alternative splicing"/>
    <isoform>
        <id>P32189-3</id>
        <name>3</name>
        <name evidence="11">GK+EX18</name>
        <sequence type="displayed"/>
    </isoform>
    <isoform>
        <id>P32189-1</id>
        <name>1</name>
        <sequence type="described" ref="VSP_000770 VSP_000771"/>
    </isoform>
    <isoform>
        <id>P32189-2</id>
        <name>2</name>
        <sequence type="described" ref="VSP_000770"/>
    </isoform>
    <isoform>
        <id>P32189-4</id>
        <name>4</name>
        <name evidence="11">GK-EX18</name>
        <sequence type="described" ref="VSP_000771"/>
    </isoform>
</comment>
<comment type="tissue specificity">
    <molecule>Isoform 2</molecule>
    <text evidence="5">Widely expressed in fetal and adult tissues.</text>
</comment>
<comment type="tissue specificity">
    <molecule>Isoform 3</molecule>
    <text evidence="5">Widely expressed in fetal and adult tissues.</text>
</comment>
<comment type="tissue specificity">
    <molecule>Isoform 4</molecule>
    <text evidence="5">The sole isoform expressed in adult liver and kidney.</text>
</comment>
<comment type="disease" evidence="3 7 8">
    <disease id="DI-01663">
        <name>Glycerol kinase deficiency</name>
        <acronym>GKD</acronym>
        <description>A metabolic disorder manifesting as 3 clinically distinct forms: infantile, juvenile, and adult. The infantile form is the most severe and is associated with severe developmental delay and adrenal insufficiency. Patients with the adult form have no symptoms and are often detected fortuitously. GKD results in hyperglycerolemia, a condition characterized by the accumulation of glycerol in the blood and urine.</description>
        <dbReference type="MIM" id="307030"/>
    </disease>
    <text>The disease is caused by variants affecting the gene represented in this entry.</text>
</comment>
<comment type="similarity">
    <text evidence="15">Belongs to the FGGY kinase family.</text>
</comment>
<comment type="sequence caution" evidence="15">
    <conflict type="frameshift">
        <sequence resource="EMBL-CDS" id="CAA48346"/>
    </conflict>
</comment>
<protein>
    <recommendedName>
        <fullName evidence="17">Glycerol kinase</fullName>
        <shortName>Glycerokinase</shortName>
        <ecNumber evidence="6">2.7.1.30</ecNumber>
    </recommendedName>
    <alternativeName>
        <fullName evidence="14">ATP:glycerol 3-phosphotransferase</fullName>
    </alternativeName>
</protein>
<name>GLPK_HUMAN</name>